<gene>
    <name type="primary">p2</name>
</gene>
<keyword id="KW-0002">3D-structure</keyword>
<keyword id="KW-0167">Capsid protein</keyword>
<keyword id="KW-1185">Reference proteome</keyword>
<keyword id="KW-1140">T=1 icosahedral capsid protein</keyword>
<keyword id="KW-0946">Virion</keyword>
<protein>
    <recommendedName>
        <fullName>Capsid protein</fullName>
        <shortName>CP</shortName>
    </recommendedName>
    <alternativeName>
        <fullName>Coat protein</fullName>
    </alternativeName>
</protein>
<sequence length="982" mass="108807">MAAPVLYGGAGGTATGPGDMRRSLMHEKKQVFAELRREAQALRVAKEARGKMSVWDPSTREGARGYREKVVRFGRQIASLLQYFENMHSPALDIIACDKFLLKYQIYGDIDRDPAFGENTMTAEVPVVWDKCEVEVKLYAGPLQKLMSRAKLVGAAREGIPNRNDVAKSTGWNQDQVQKFPDNRMDSLISLLEQMQTGQSKLTRLVKGFLILLEMAERKEVDFHVGNHIHVTYAIAPVCDSYDLPGRCYVFNSKPTSEAHAAVLLAMCREYPPPQFASHVSVPADAEDVCIVSQGRQIQPGSAVTLNPGLVYSSILTYAMDTSCTDLLQEAQIIACSLQENRYFSRIGLPTVVSLYDLMVPAFIAQNSALEGARLSGDLSKAVGRVHQMLGMVAAKDIISATHMQSRTGFDPSHGIRQYLNSNSRLVTQMASKLTGIGLFDATPQMRIFSEMDTADYADMLHLTIFEGLWLVQDASVCTDNGPISFLVNGEKLLSADRAGYDVLVEELTLANIRIEHHKMPTGAFTTRWVAAKRDSALRLTPRSRTAHRVDMVRECDFNPTMNLKAAGPKARLRGSGVKSRRRVSEVPLAHVFRSPPRRESTTTTDDSPRWLTREGPQLTRRVPIIDEPPAYESGRSSSPVTSSISEGTSQHEEEMGLFDAEELPMQQTVIATEARRRLGRGTLERIQEAALEGQVAQGEVTAEKNRRIEAMLSARDPQFTGREQITKMLSDGGLGVREREEWLELVDKTVGVKGLKEVRSIDGIRRHLEEYGEREGFAVVRTLLSGNSKHVRRINQLIRESNPSAFETEASRMRRLRADWDGDAGSAPVNALHFVGNSPGWKRWLENNNIPSDIQVAGKKRMCSYLAEVLSHGNLKLSDATKLGRLVEGTSLDLFPPQLSSEEFSTCSEATLAWRNAPSSLGVRPFAQEDSRWLVMAATCGGGSFGIGKLKSLCKEFSVPKELRDALRVKYGLFGGKDSLE</sequence>
<name>CAPSD_PCVC</name>
<feature type="chain" id="PRO_0000404265" description="Capsid protein">
    <location>
        <begin position="1"/>
        <end position="982"/>
    </location>
</feature>
<feature type="region of interest" description="Disordered" evidence="1">
    <location>
        <begin position="592"/>
        <end position="613"/>
    </location>
</feature>
<feature type="region of interest" description="Disordered" evidence="1">
    <location>
        <begin position="628"/>
        <end position="655"/>
    </location>
</feature>
<feature type="compositionally biased region" description="Basic and acidic residues" evidence="1">
    <location>
        <begin position="597"/>
        <end position="613"/>
    </location>
</feature>
<feature type="compositionally biased region" description="Polar residues" evidence="1">
    <location>
        <begin position="635"/>
        <end position="649"/>
    </location>
</feature>
<organism>
    <name type="scientific">Penicillium chrysogenum virus (isolate Caston/2003)</name>
    <name type="common">PcV</name>
    <dbReference type="NCBI Taxonomy" id="654932"/>
    <lineage>
        <taxon>Viruses</taxon>
        <taxon>Riboviria</taxon>
        <taxon>Orthornavirae</taxon>
        <taxon>Duplornaviricota</taxon>
        <taxon>Chrymotiviricetes</taxon>
        <taxon>Ghabrivirales</taxon>
        <taxon>Chrysoviridae</taxon>
        <taxon>Alphachrysovirus</taxon>
        <taxon>Alphachrysovirus penicillii</taxon>
    </lineage>
</organism>
<evidence type="ECO:0000256" key="1">
    <source>
        <dbReference type="SAM" id="MobiDB-lite"/>
    </source>
</evidence>
<evidence type="ECO:0000269" key="2">
    <source>
    </source>
</evidence>
<evidence type="ECO:0000305" key="3"/>
<reference key="1">
    <citation type="journal article" date="2003" name="J. Mol. Biol.">
        <title>Three-dimensional structure of penicillium chrysogenum virus: a double-stranded RNA virus with a genuine T=1 capsid.</title>
        <authorList>
            <person name="Caston J.R."/>
            <person name="Ghabrial S.A."/>
            <person name="Jiang D."/>
            <person name="Rivas G."/>
            <person name="Alfonso C."/>
            <person name="Roca R."/>
            <person name="Luque D."/>
            <person name="Carrascosa J.L."/>
        </authorList>
    </citation>
    <scope>NUCLEOTIDE SEQUENCE [GENOMIC RNA]</scope>
</reference>
<reference key="2">
    <citation type="journal article" date="2004" name="J. Gen. Virol.">
        <title>Molecular characterization of Penicillium chrysogenum virus: reconsideration of the taxonomy of the genus Chrysovirus.</title>
        <authorList>
            <person name="Jiang D."/>
            <person name="Ghabrial S.A."/>
        </authorList>
    </citation>
    <scope>NUCLEOTIDE SEQUENCE [GENOMIC RNA]</scope>
</reference>
<reference key="3">
    <citation type="journal article" date="2010" name="J. Virol.">
        <title>The T=1 capsid protein of Penicillium chrysogenum virus is formed by a repeated helix-rich core indicative of gene duplication.</title>
        <authorList>
            <person name="Luque D."/>
            <person name="Gonzalez J.M."/>
            <person name="Garriga D."/>
            <person name="Ghabrial S.A."/>
            <person name="Havens W.M."/>
            <person name="Trus B."/>
            <person name="Verdaguer N."/>
            <person name="Carrascosa J.L."/>
            <person name="Caston J.R."/>
        </authorList>
    </citation>
    <scope>FUNCTION</scope>
</reference>
<accession>Q8JVC1</accession>
<dbReference type="EMBL" id="AF296440">
    <property type="protein sequence ID" value="AAM95602.1"/>
    <property type="molecule type" value="Genomic_RNA"/>
</dbReference>
<dbReference type="RefSeq" id="YP_392483.1">
    <property type="nucleotide sequence ID" value="NC_007540.1"/>
</dbReference>
<dbReference type="PDB" id="3J3I">
    <property type="method" value="EM"/>
    <property type="resolution" value="4.10 A"/>
    <property type="chains" value="A=1-982"/>
</dbReference>
<dbReference type="PDBsum" id="3J3I"/>
<dbReference type="SMR" id="Q8JVC1"/>
<dbReference type="KEGG" id="vg:5075913"/>
<dbReference type="EvolutionaryTrace" id="Q8JVC1"/>
<dbReference type="Proteomes" id="UP000006714">
    <property type="component" value="Genome"/>
</dbReference>
<dbReference type="GO" id="GO:0039615">
    <property type="term" value="C:T=1 icosahedral viral capsid"/>
    <property type="evidence" value="ECO:0007669"/>
    <property type="project" value="UniProtKB-KW"/>
</dbReference>
<dbReference type="InterPro" id="IPR054395">
    <property type="entry name" value="P2_C_fungal_virus"/>
</dbReference>
<dbReference type="InterPro" id="IPR049324">
    <property type="entry name" value="P2_N_fungal_virus"/>
</dbReference>
<dbReference type="Pfam" id="PF22144">
    <property type="entry name" value="Fungal_virus_P2_C"/>
    <property type="match status" value="1"/>
</dbReference>
<dbReference type="Pfam" id="PF21685">
    <property type="entry name" value="Fungal_virus_P2_N"/>
    <property type="match status" value="1"/>
</dbReference>
<comment type="function">
    <text evidence="2">Capsid protein self-assembles to form an icosahedral capsid with a T=1 symmetry, about 35-40 nm in diameter.</text>
</comment>
<comment type="subunit">
    <text>Homomultimer.</text>
</comment>
<comment type="subcellular location">
    <subcellularLocation>
        <location evidence="3">Virion</location>
    </subcellularLocation>
</comment>
<proteinExistence type="evidence at protein level"/>
<organismHost>
    <name type="scientific">Penicillium chrysogenum</name>
    <name type="common">Penicillium notatum</name>
    <dbReference type="NCBI Taxonomy" id="5076"/>
</organismHost>